<proteinExistence type="inferred from homology"/>
<gene>
    <name evidence="2" type="primary">gB</name>
    <name type="synonym">GI</name>
    <name type="ORF">UL27</name>
</gene>
<accession>P12640</accession>
<organismHost>
    <name type="scientific">Bos taurus</name>
    <name type="common">Bovine</name>
    <dbReference type="NCBI Taxonomy" id="9913"/>
</organismHost>
<evidence type="ECO:0000255" key="1"/>
<evidence type="ECO:0000255" key="2">
    <source>
        <dbReference type="HAMAP-Rule" id="MF_04032"/>
    </source>
</evidence>
<evidence type="ECO:0000256" key="3">
    <source>
        <dbReference type="SAM" id="MobiDB-lite"/>
    </source>
</evidence>
<evidence type="ECO:0000305" key="4"/>
<feature type="signal peptide" evidence="1">
    <location>
        <begin position="1"/>
        <end position="62"/>
    </location>
</feature>
<feature type="chain" id="PRO_0000038168" description="Envelope glycoprotein B">
    <location>
        <begin position="63"/>
        <end position="932"/>
    </location>
</feature>
<feature type="topological domain" description="Virion surface" evidence="2">
    <location>
        <begin position="63"/>
        <end position="806"/>
    </location>
</feature>
<feature type="transmembrane region" description="Helical" evidence="2">
    <location>
        <begin position="807"/>
        <end position="827"/>
    </location>
</feature>
<feature type="topological domain" description="Intravirion" evidence="2">
    <location>
        <begin position="828"/>
        <end position="932"/>
    </location>
</feature>
<feature type="region of interest" description="Disordered" evidence="3">
    <location>
        <begin position="1"/>
        <end position="25"/>
    </location>
</feature>
<feature type="region of interest" description="Disordered" evidence="3">
    <location>
        <begin position="67"/>
        <end position="105"/>
    </location>
</feature>
<feature type="region of interest" description="Involved in fusion and/or binding to host membrane" evidence="2">
    <location>
        <begin position="184"/>
        <end position="190"/>
    </location>
</feature>
<feature type="region of interest" description="Involved in fusion and/or binding to host membrane" evidence="2">
    <location>
        <begin position="269"/>
        <end position="276"/>
    </location>
</feature>
<feature type="region of interest" description="Disordered" evidence="3">
    <location>
        <begin position="492"/>
        <end position="527"/>
    </location>
</feature>
<feature type="region of interest" description="Hydrophobic membrane proximal region" evidence="2">
    <location>
        <begin position="751"/>
        <end position="804"/>
    </location>
</feature>
<feature type="region of interest" description="Hydrophobic membrane proximal region">
    <location>
        <begin position="784"/>
        <end position="804"/>
    </location>
</feature>
<feature type="short sequence motif" description="Golgi targeting" evidence="2">
    <location>
        <begin position="880"/>
        <end position="883"/>
    </location>
</feature>
<feature type="short sequence motif" description="Internalization motif" evidence="2">
    <location>
        <begin position="921"/>
        <end position="924"/>
    </location>
</feature>
<feature type="compositionally biased region" description="Low complexity" evidence="3">
    <location>
        <begin position="1"/>
        <end position="12"/>
    </location>
</feature>
<feature type="compositionally biased region" description="Pro residues" evidence="3">
    <location>
        <begin position="71"/>
        <end position="95"/>
    </location>
</feature>
<feature type="compositionally biased region" description="Gly residues" evidence="3">
    <location>
        <begin position="511"/>
        <end position="526"/>
    </location>
</feature>
<feature type="glycosylation site" description="N-linked (GlcNAc...) asparagine; by host" evidence="2">
    <location>
        <position position="105"/>
    </location>
</feature>
<feature type="glycosylation site" description="N-linked (GlcNAc...) asparagine; by host" evidence="2">
    <location>
        <position position="153"/>
    </location>
</feature>
<feature type="glycosylation site" description="N-linked (GlcNAc...) asparagine; by host" evidence="2">
    <location>
        <position position="441"/>
    </location>
</feature>
<feature type="glycosylation site" description="N-linked (GlcNAc...) asparagine; by host" evidence="2">
    <location>
        <position position="483"/>
    </location>
</feature>
<feature type="glycosylation site" description="N-linked (GlcNAc...) asparagine; by host" evidence="2">
    <location>
        <position position="640"/>
    </location>
</feature>
<feature type="glycosylation site" description="N-linked (GlcNAc...) asparagine; by host" evidence="2">
    <location>
        <position position="706"/>
    </location>
</feature>
<feature type="disulfide bond" evidence="2">
    <location>
        <begin position="128"/>
        <end position="607"/>
    </location>
</feature>
<feature type="disulfide bond" evidence="2">
    <location>
        <begin position="145"/>
        <end position="563"/>
    </location>
</feature>
<feature type="disulfide bond" evidence="2">
    <location>
        <begin position="218"/>
        <end position="282"/>
    </location>
</feature>
<feature type="disulfide bond" evidence="2">
    <location>
        <begin position="375"/>
        <end position="423"/>
    </location>
</feature>
<feature type="disulfide bond" evidence="2">
    <location>
        <begin position="628"/>
        <end position="665"/>
    </location>
</feature>
<name>GB_BHV1C</name>
<organism>
    <name type="scientific">Bovine herpesvirus 1.1 (strain Cooper)</name>
    <name type="common">BoHV-1</name>
    <name type="synonym">Infectious bovine rhinotracheitis virus</name>
    <dbReference type="NCBI Taxonomy" id="10323"/>
    <lineage>
        <taxon>Viruses</taxon>
        <taxon>Duplodnaviria</taxon>
        <taxon>Heunggongvirae</taxon>
        <taxon>Peploviricota</taxon>
        <taxon>Herviviricetes</taxon>
        <taxon>Herpesvirales</taxon>
        <taxon>Orthoherpesviridae</taxon>
        <taxon>Alphaherpesvirinae</taxon>
        <taxon>Varicellovirus</taxon>
        <taxon>Varicellovirus bovinealpha1</taxon>
    </lineage>
</organism>
<dbReference type="EMBL" id="M21474">
    <property type="protein sequence ID" value="AAA46055.1"/>
    <property type="molecule type" value="Genomic_DNA"/>
</dbReference>
<dbReference type="EMBL" id="Z78205">
    <property type="protein sequence ID" value="CAB01598.1"/>
    <property type="molecule type" value="Genomic_DNA"/>
</dbReference>
<dbReference type="EMBL" id="AJ004801">
    <property type="protein sequence ID" value="CAA06106.1"/>
    <property type="molecule type" value="Genomic_DNA"/>
</dbReference>
<dbReference type="PIR" id="A28877">
    <property type="entry name" value="VGBEBC"/>
</dbReference>
<dbReference type="RefSeq" id="NP_045331.1">
    <property type="nucleotide sequence ID" value="NC_001847.1"/>
</dbReference>
<dbReference type="SMR" id="P12640"/>
<dbReference type="GlyCosmos" id="P12640">
    <property type="glycosylation" value="6 sites, No reported glycans"/>
</dbReference>
<dbReference type="Proteomes" id="UP000202075">
    <property type="component" value="Segment"/>
</dbReference>
<dbReference type="GO" id="GO:0044175">
    <property type="term" value="C:host cell endosome membrane"/>
    <property type="evidence" value="ECO:0007669"/>
    <property type="project" value="UniProtKB-SubCell"/>
</dbReference>
<dbReference type="GO" id="GO:0044178">
    <property type="term" value="C:host cell Golgi membrane"/>
    <property type="evidence" value="ECO:0007669"/>
    <property type="project" value="UniProtKB-SubCell"/>
</dbReference>
<dbReference type="GO" id="GO:0020002">
    <property type="term" value="C:host cell plasma membrane"/>
    <property type="evidence" value="ECO:0007669"/>
    <property type="project" value="UniProtKB-SubCell"/>
</dbReference>
<dbReference type="GO" id="GO:0016020">
    <property type="term" value="C:membrane"/>
    <property type="evidence" value="ECO:0007669"/>
    <property type="project" value="UniProtKB-KW"/>
</dbReference>
<dbReference type="GO" id="GO:0019031">
    <property type="term" value="C:viral envelope"/>
    <property type="evidence" value="ECO:0007669"/>
    <property type="project" value="UniProtKB-KW"/>
</dbReference>
<dbReference type="GO" id="GO:0055036">
    <property type="term" value="C:virion membrane"/>
    <property type="evidence" value="ECO:0007669"/>
    <property type="project" value="UniProtKB-SubCell"/>
</dbReference>
<dbReference type="GO" id="GO:0046718">
    <property type="term" value="P:symbiont entry into host cell"/>
    <property type="evidence" value="ECO:0007669"/>
    <property type="project" value="UniProtKB-KW"/>
</dbReference>
<dbReference type="GO" id="GO:0019062">
    <property type="term" value="P:virion attachment to host cell"/>
    <property type="evidence" value="ECO:0007669"/>
    <property type="project" value="UniProtKB-KW"/>
</dbReference>
<dbReference type="FunFam" id="2.30.30.1230:FF:000001">
    <property type="entry name" value="Envelope glycoprotein B"/>
    <property type="match status" value="1"/>
</dbReference>
<dbReference type="Gene3D" id="1.20.5.1890">
    <property type="match status" value="1"/>
</dbReference>
<dbReference type="Gene3D" id="2.30.29.100">
    <property type="match status" value="1"/>
</dbReference>
<dbReference type="Gene3D" id="2.30.30.1230">
    <property type="match status" value="1"/>
</dbReference>
<dbReference type="Gene3D" id="6.10.250.3280">
    <property type="match status" value="1"/>
</dbReference>
<dbReference type="HAMAP" id="MF_04032">
    <property type="entry name" value="HSV_GB"/>
    <property type="match status" value="1"/>
</dbReference>
<dbReference type="InterPro" id="IPR035377">
    <property type="entry name" value="Glycoprot_B_PH1"/>
</dbReference>
<dbReference type="InterPro" id="IPR035381">
    <property type="entry name" value="Glycoprot_B_PH2"/>
</dbReference>
<dbReference type="InterPro" id="IPR038631">
    <property type="entry name" value="Glycoprot_B_PH2_sf"/>
</dbReference>
<dbReference type="InterPro" id="IPR055341">
    <property type="entry name" value="Glycoprotein_B_ecto_C"/>
</dbReference>
<dbReference type="InterPro" id="IPR000234">
    <property type="entry name" value="Herpes_Glycoprot_B"/>
</dbReference>
<dbReference type="PANTHER" id="PTHR48125">
    <property type="entry name" value="LP07818P1"/>
    <property type="match status" value="1"/>
</dbReference>
<dbReference type="PANTHER" id="PTHR48125:SF10">
    <property type="entry name" value="OS12G0136300 PROTEIN"/>
    <property type="match status" value="1"/>
</dbReference>
<dbReference type="Pfam" id="PF17416">
    <property type="entry name" value="Glycoprot_B_PH1"/>
    <property type="match status" value="1"/>
</dbReference>
<dbReference type="Pfam" id="PF17417">
    <property type="entry name" value="Glycoprot_B_PH2"/>
    <property type="match status" value="1"/>
</dbReference>
<dbReference type="Pfam" id="PF00606">
    <property type="entry name" value="Glycoprotein_B"/>
    <property type="match status" value="1"/>
</dbReference>
<dbReference type="SUPFAM" id="SSF161008">
    <property type="entry name" value="Viral glycoprotein ectodomain-like"/>
    <property type="match status" value="1"/>
</dbReference>
<sequence>MAARGGAERAAGAGDGRRGQRRHLRPGRVLAALRGPAAPGAGGARAALAAALLWATWALLLAAPAAGRPATTPPAPPPEEAASPAPPASPSPPGPDGDDAASPDNSTDVRAALRLAQAAGENSRFFVCPPPSGATVVRLAPARPCPEYGLGRNYTEGIGVIYKENIAPYTFKAYIYKNVIVTTTWAGSTYAAITNQYTDRVPVGMGEITDLVDKKWRCLSKAEYLRSGRKVVAFDRDDDPWEAPLKPARLSAPGVRGWHTTDDVYTALGSAGLYRTGTSVNCIVEEVEARSVYPYDSFALSTGDIIYMSPFYGLREGAHREHTSYSPERFQQIEGYYKRDMATGRRLKEPVSRNFLRTQHVTVAWDWVPKRKNVCSLAKWREADEMLRDESRGNFRFTARSLSATFVSDSHTFALQNVPLSDCVIEEAEAAVERVYRERYNGTHVLSGSLETYLARGGFVVAFRPMLSNELAKLYLQELARSNGTLEGLFAAAAPKPGPRRARRAAPSAPGGPGAANGPAGDGDAGGRVTTVSSAEFAALQFTYDHIQDHVNTMFSRLATSWCLLQNKERALWAEAAKLNPSAAASAALDRRAAARMLGDAMAVTYCHELGEGRVFIENSMRAPGGVCYSRPPVSFAFGNESEPVEGQLGEDNELLPGRELVEPCTANHKRYFRFGADYVYYENYAYVRRVPLAELEVISTFVDLNLTVLEDREFLPLEVYTRAELADTGLLDYSEIQRRNQLHELRFYDIDRVVKTDGNMAIMRGLANFFQGLGAVGQAVGTVVLGAAGAALSTVSGIASFIANPFGALATGLLVLAGLVAAFLAYRYISRLRSNPMKALYPITTRALKDDARGATAPGEEEEEFDAAKLEQAREMIKYMSLVSAVERQEHKAKKSNKGGPLLATRLTQLALRRRAPPEYQQLPMADVGGA</sequence>
<comment type="function">
    <text evidence="2">Envelope glycoprotein that forms spikes at the surface of virion envelope. Essential for the initial attachment to heparan sulfate moieties of the host cell surface proteoglycans. Involved in fusion of viral and cellular membranes leading to virus entry into the host cell. Following initial binding to its host receptors, membrane fusion is mediated by the fusion machinery composed at least of gB and the heterodimer gH/gL. May be involved in the fusion between the virion envelope and the outer nuclear membrane during virion egress.</text>
</comment>
<comment type="subunit">
    <text evidence="2">Homotrimer; disulfide-linked. Binds to heparan sulfate proteoglycans. Interacts with gH/gL heterodimer.</text>
</comment>
<comment type="subcellular location">
    <subcellularLocation>
        <location evidence="2">Virion membrane</location>
        <topology evidence="2">Single-pass type I membrane protein</topology>
    </subcellularLocation>
    <subcellularLocation>
        <location evidence="2">Host cell membrane</location>
        <topology evidence="2">Single-pass type I membrane protein</topology>
    </subcellularLocation>
    <subcellularLocation>
        <location evidence="2">Host endosome membrane</location>
        <topology evidence="2">Single-pass type I membrane protein</topology>
    </subcellularLocation>
    <subcellularLocation>
        <location evidence="2">Host Golgi apparatus membrane</location>
        <topology evidence="2">Single-pass type I membrane protein</topology>
    </subcellularLocation>
    <text evidence="2">During virion morphogenesis, this protein probably accumulates in the endosomes and trans-Golgi where secondary envelopment occurs. It is probably transported to the cell surface from where it is endocytosed and directed to the trans-Golgi network (TGN).</text>
</comment>
<comment type="PTM">
    <text evidence="4">A proteolytic cleavage by host furin generates two subunits that remain linked by disulfide bonds.</text>
</comment>
<comment type="similarity">
    <text evidence="2">Belongs to the herpesviridae glycoprotein B family.</text>
</comment>
<protein>
    <recommendedName>
        <fullName evidence="2">Envelope glycoprotein B</fullName>
        <shortName evidence="2">gB</shortName>
    </recommendedName>
</protein>
<keyword id="KW-1015">Disulfide bond</keyword>
<keyword id="KW-0325">Glycoprotein</keyword>
<keyword id="KW-1032">Host cell membrane</keyword>
<keyword id="KW-1039">Host endosome</keyword>
<keyword id="KW-1040">Host Golgi apparatus</keyword>
<keyword id="KW-1043">Host membrane</keyword>
<keyword id="KW-0945">Host-virus interaction</keyword>
<keyword id="KW-0472">Membrane</keyword>
<keyword id="KW-0732">Signal</keyword>
<keyword id="KW-0812">Transmembrane</keyword>
<keyword id="KW-1133">Transmembrane helix</keyword>
<keyword id="KW-1161">Viral attachment to host cell</keyword>
<keyword id="KW-0261">Viral envelope protein</keyword>
<keyword id="KW-0946">Virion</keyword>
<keyword id="KW-1160">Virus entry into host cell</keyword>
<reference key="1">
    <citation type="journal article" date="1988" name="J. Virol.">
        <title>Comparison of the bovine herpesvirus 1 gI gene and the herpes simplex virus type 1 gB gene.</title>
        <authorList>
            <person name="Whitbeck J.C."/>
            <person name="Bello L.J."/>
            <person name="Lawrence W.C."/>
        </authorList>
    </citation>
    <scope>NUCLEOTIDE SEQUENCE [GENOMIC DNA]</scope>
</reference>